<accession>A1WAX5</accession>
<keyword id="KW-0963">Cytoplasm</keyword>
<keyword id="KW-0275">Fatty acid biosynthesis</keyword>
<keyword id="KW-0276">Fatty acid metabolism</keyword>
<keyword id="KW-0444">Lipid biosynthesis</keyword>
<keyword id="KW-0443">Lipid metabolism</keyword>
<keyword id="KW-0596">Phosphopantetheine</keyword>
<keyword id="KW-0597">Phosphoprotein</keyword>
<proteinExistence type="inferred from homology"/>
<evidence type="ECO:0000255" key="1">
    <source>
        <dbReference type="HAMAP-Rule" id="MF_01217"/>
    </source>
</evidence>
<evidence type="ECO:0000255" key="2">
    <source>
        <dbReference type="PROSITE-ProRule" id="PRU00258"/>
    </source>
</evidence>
<name>ACP_ACISJ</name>
<sequence>MSDIEARVKKIIAEQLGVEESQVTNEKAFVADLGADSLDTVELVMALEDEFGIEIPDEDAEKITTVQNAIDYANTHQKA</sequence>
<protein>
    <recommendedName>
        <fullName evidence="1">Acyl carrier protein</fullName>
        <shortName evidence="1">ACP</shortName>
    </recommendedName>
</protein>
<gene>
    <name evidence="1" type="primary">acpP</name>
    <name type="ordered locus">Ajs_3277</name>
</gene>
<organism>
    <name type="scientific">Acidovorax sp. (strain JS42)</name>
    <dbReference type="NCBI Taxonomy" id="232721"/>
    <lineage>
        <taxon>Bacteria</taxon>
        <taxon>Pseudomonadati</taxon>
        <taxon>Pseudomonadota</taxon>
        <taxon>Betaproteobacteria</taxon>
        <taxon>Burkholderiales</taxon>
        <taxon>Comamonadaceae</taxon>
        <taxon>Acidovorax</taxon>
    </lineage>
</organism>
<dbReference type="EMBL" id="CP000539">
    <property type="protein sequence ID" value="ABM43400.1"/>
    <property type="molecule type" value="Genomic_DNA"/>
</dbReference>
<dbReference type="SMR" id="A1WAX5"/>
<dbReference type="STRING" id="232721.Ajs_3277"/>
<dbReference type="KEGG" id="ajs:Ajs_3277"/>
<dbReference type="eggNOG" id="COG0236">
    <property type="taxonomic scope" value="Bacteria"/>
</dbReference>
<dbReference type="HOGENOM" id="CLU_108696_5_1_4"/>
<dbReference type="UniPathway" id="UPA00094"/>
<dbReference type="Proteomes" id="UP000000645">
    <property type="component" value="Chromosome"/>
</dbReference>
<dbReference type="GO" id="GO:0005829">
    <property type="term" value="C:cytosol"/>
    <property type="evidence" value="ECO:0007669"/>
    <property type="project" value="TreeGrafter"/>
</dbReference>
<dbReference type="GO" id="GO:0016020">
    <property type="term" value="C:membrane"/>
    <property type="evidence" value="ECO:0007669"/>
    <property type="project" value="GOC"/>
</dbReference>
<dbReference type="GO" id="GO:0000035">
    <property type="term" value="F:acyl binding"/>
    <property type="evidence" value="ECO:0007669"/>
    <property type="project" value="TreeGrafter"/>
</dbReference>
<dbReference type="GO" id="GO:0000036">
    <property type="term" value="F:acyl carrier activity"/>
    <property type="evidence" value="ECO:0007669"/>
    <property type="project" value="UniProtKB-UniRule"/>
</dbReference>
<dbReference type="GO" id="GO:0031177">
    <property type="term" value="F:phosphopantetheine binding"/>
    <property type="evidence" value="ECO:0007669"/>
    <property type="project" value="InterPro"/>
</dbReference>
<dbReference type="GO" id="GO:0009245">
    <property type="term" value="P:lipid A biosynthetic process"/>
    <property type="evidence" value="ECO:0007669"/>
    <property type="project" value="TreeGrafter"/>
</dbReference>
<dbReference type="FunFam" id="1.10.1200.10:FF:000001">
    <property type="entry name" value="Acyl carrier protein"/>
    <property type="match status" value="1"/>
</dbReference>
<dbReference type="Gene3D" id="1.10.1200.10">
    <property type="entry name" value="ACP-like"/>
    <property type="match status" value="1"/>
</dbReference>
<dbReference type="HAMAP" id="MF_01217">
    <property type="entry name" value="Acyl_carrier"/>
    <property type="match status" value="1"/>
</dbReference>
<dbReference type="InterPro" id="IPR003231">
    <property type="entry name" value="ACP"/>
</dbReference>
<dbReference type="InterPro" id="IPR036736">
    <property type="entry name" value="ACP-like_sf"/>
</dbReference>
<dbReference type="InterPro" id="IPR020806">
    <property type="entry name" value="PKS_PP-bd"/>
</dbReference>
<dbReference type="InterPro" id="IPR009081">
    <property type="entry name" value="PP-bd_ACP"/>
</dbReference>
<dbReference type="InterPro" id="IPR006162">
    <property type="entry name" value="Ppantetheine_attach_site"/>
</dbReference>
<dbReference type="NCBIfam" id="TIGR00517">
    <property type="entry name" value="acyl_carrier"/>
    <property type="match status" value="1"/>
</dbReference>
<dbReference type="NCBIfam" id="NF002148">
    <property type="entry name" value="PRK00982.1-2"/>
    <property type="match status" value="1"/>
</dbReference>
<dbReference type="NCBIfam" id="NF002149">
    <property type="entry name" value="PRK00982.1-3"/>
    <property type="match status" value="1"/>
</dbReference>
<dbReference type="NCBIfam" id="NF002150">
    <property type="entry name" value="PRK00982.1-4"/>
    <property type="match status" value="1"/>
</dbReference>
<dbReference type="NCBIfam" id="NF002151">
    <property type="entry name" value="PRK00982.1-5"/>
    <property type="match status" value="1"/>
</dbReference>
<dbReference type="PANTHER" id="PTHR20863">
    <property type="entry name" value="ACYL CARRIER PROTEIN"/>
    <property type="match status" value="1"/>
</dbReference>
<dbReference type="PANTHER" id="PTHR20863:SF76">
    <property type="entry name" value="CARRIER DOMAIN-CONTAINING PROTEIN"/>
    <property type="match status" value="1"/>
</dbReference>
<dbReference type="Pfam" id="PF00550">
    <property type="entry name" value="PP-binding"/>
    <property type="match status" value="1"/>
</dbReference>
<dbReference type="SMART" id="SM00823">
    <property type="entry name" value="PKS_PP"/>
    <property type="match status" value="1"/>
</dbReference>
<dbReference type="SUPFAM" id="SSF47336">
    <property type="entry name" value="ACP-like"/>
    <property type="match status" value="1"/>
</dbReference>
<dbReference type="PROSITE" id="PS50075">
    <property type="entry name" value="CARRIER"/>
    <property type="match status" value="1"/>
</dbReference>
<dbReference type="PROSITE" id="PS00012">
    <property type="entry name" value="PHOSPHOPANTETHEINE"/>
    <property type="match status" value="1"/>
</dbReference>
<feature type="chain" id="PRO_1000066543" description="Acyl carrier protein">
    <location>
        <begin position="1"/>
        <end position="79"/>
    </location>
</feature>
<feature type="domain" description="Carrier" evidence="2">
    <location>
        <begin position="2"/>
        <end position="77"/>
    </location>
</feature>
<feature type="modified residue" description="O-(pantetheine 4'-phosphoryl)serine" evidence="2">
    <location>
        <position position="37"/>
    </location>
</feature>
<comment type="function">
    <text evidence="1">Carrier of the growing fatty acid chain in fatty acid biosynthesis.</text>
</comment>
<comment type="pathway">
    <text evidence="1">Lipid metabolism; fatty acid biosynthesis.</text>
</comment>
<comment type="subcellular location">
    <subcellularLocation>
        <location evidence="1">Cytoplasm</location>
    </subcellularLocation>
</comment>
<comment type="PTM">
    <text evidence="1">4'-phosphopantetheine is transferred from CoA to a specific serine of apo-ACP by AcpS. This modification is essential for activity because fatty acids are bound in thioester linkage to the sulfhydryl of the prosthetic group.</text>
</comment>
<comment type="similarity">
    <text evidence="1">Belongs to the acyl carrier protein (ACP) family.</text>
</comment>
<reference key="1">
    <citation type="submission" date="2006-12" db="EMBL/GenBank/DDBJ databases">
        <title>Complete sequence of chromosome 1 of Acidovorax sp. JS42.</title>
        <authorList>
            <person name="Copeland A."/>
            <person name="Lucas S."/>
            <person name="Lapidus A."/>
            <person name="Barry K."/>
            <person name="Detter J.C."/>
            <person name="Glavina del Rio T."/>
            <person name="Dalin E."/>
            <person name="Tice H."/>
            <person name="Pitluck S."/>
            <person name="Chertkov O."/>
            <person name="Brettin T."/>
            <person name="Bruce D."/>
            <person name="Han C."/>
            <person name="Tapia R."/>
            <person name="Gilna P."/>
            <person name="Schmutz J."/>
            <person name="Larimer F."/>
            <person name="Land M."/>
            <person name="Hauser L."/>
            <person name="Kyrpides N."/>
            <person name="Kim E."/>
            <person name="Stahl D."/>
            <person name="Richardson P."/>
        </authorList>
    </citation>
    <scope>NUCLEOTIDE SEQUENCE [LARGE SCALE GENOMIC DNA]</scope>
    <source>
        <strain>JS42</strain>
    </source>
</reference>